<evidence type="ECO:0000255" key="1">
    <source>
        <dbReference type="HAMAP-Rule" id="MF_00428"/>
    </source>
</evidence>
<sequence length="210" mass="22408">MADKSEMKKLLLTPVLGNNPIALQVLGVCSALAVTSQMKTAFVMTLAVTAVTAFSNLFISLIRNQIPNSVRIIAQMAVIASLVIVVDQVLKAYAYDISKQLSVFVGLIITNCIVMGRAEAYAMKSAPLPSFLDGIGNGLGYGAVLLTVATVREILGSGTWFGIELLPLVNNGGWYVPNGLLLLPPSAFFIIGLIIWGVRTKDPKQVEAKD</sequence>
<reference key="1">
    <citation type="journal article" date="2006" name="J. Bacteriol.">
        <title>Genome sequence of Aeromonas hydrophila ATCC 7966T: jack of all trades.</title>
        <authorList>
            <person name="Seshadri R."/>
            <person name="Joseph S.W."/>
            <person name="Chopra A.K."/>
            <person name="Sha J."/>
            <person name="Shaw J."/>
            <person name="Graf J."/>
            <person name="Haft D.H."/>
            <person name="Wu M."/>
            <person name="Ren Q."/>
            <person name="Rosovitz M.J."/>
            <person name="Madupu R."/>
            <person name="Tallon L."/>
            <person name="Kim M."/>
            <person name="Jin S."/>
            <person name="Vuong H."/>
            <person name="Stine O.C."/>
            <person name="Ali A."/>
            <person name="Horneman A.J."/>
            <person name="Heidelberg J.F."/>
        </authorList>
    </citation>
    <scope>NUCLEOTIDE SEQUENCE [LARGE SCALE GENOMIC DNA]</scope>
    <source>
        <strain>ATCC 7966 / DSM 30187 / BCRC 13018 / CCUG 14551 / JCM 1027 / KCTC 2358 / NCIMB 9240 / NCTC 8049</strain>
    </source>
</reference>
<proteinExistence type="inferred from homology"/>
<keyword id="KW-0997">Cell inner membrane</keyword>
<keyword id="KW-1003">Cell membrane</keyword>
<keyword id="KW-0406">Ion transport</keyword>
<keyword id="KW-0472">Membrane</keyword>
<keyword id="KW-0520">NAD</keyword>
<keyword id="KW-1185">Reference proteome</keyword>
<keyword id="KW-0915">Sodium</keyword>
<keyword id="KW-0739">Sodium transport</keyword>
<keyword id="KW-1278">Translocase</keyword>
<keyword id="KW-0812">Transmembrane</keyword>
<keyword id="KW-1133">Transmembrane helix</keyword>
<keyword id="KW-0813">Transport</keyword>
<keyword id="KW-0830">Ubiquinone</keyword>
<feature type="chain" id="PRO_1000060147" description="Na(+)-translocating NADH-quinone reductase subunit D">
    <location>
        <begin position="1"/>
        <end position="210"/>
    </location>
</feature>
<feature type="transmembrane region" description="Helical" evidence="1">
    <location>
        <begin position="42"/>
        <end position="62"/>
    </location>
</feature>
<feature type="transmembrane region" description="Helical" evidence="1">
    <location>
        <begin position="72"/>
        <end position="92"/>
    </location>
</feature>
<feature type="transmembrane region" description="Helical" evidence="1">
    <location>
        <begin position="103"/>
        <end position="123"/>
    </location>
</feature>
<feature type="transmembrane region" description="Helical" evidence="1">
    <location>
        <begin position="131"/>
        <end position="151"/>
    </location>
</feature>
<feature type="transmembrane region" description="Helical" evidence="1">
    <location>
        <begin position="178"/>
        <end position="198"/>
    </location>
</feature>
<protein>
    <recommendedName>
        <fullName evidence="1">Na(+)-translocating NADH-quinone reductase subunit D</fullName>
        <shortName evidence="1">Na(+)-NQR subunit D</shortName>
        <shortName evidence="1">Na(+)-translocating NQR subunit D</shortName>
        <ecNumber evidence="1">7.2.1.1</ecNumber>
    </recommendedName>
    <alternativeName>
        <fullName evidence="1">NQR complex subunit D</fullName>
    </alternativeName>
    <alternativeName>
        <fullName evidence="1">NQR-1 subunit D</fullName>
    </alternativeName>
</protein>
<gene>
    <name evidence="1" type="primary">nqrD</name>
    <name type="ordered locus">AHA_1139</name>
</gene>
<dbReference type="EC" id="7.2.1.1" evidence="1"/>
<dbReference type="EMBL" id="CP000462">
    <property type="protein sequence ID" value="ABK38393.1"/>
    <property type="molecule type" value="Genomic_DNA"/>
</dbReference>
<dbReference type="RefSeq" id="WP_005303545.1">
    <property type="nucleotide sequence ID" value="NC_008570.1"/>
</dbReference>
<dbReference type="RefSeq" id="YP_855680.1">
    <property type="nucleotide sequence ID" value="NC_008570.1"/>
</dbReference>
<dbReference type="SMR" id="A0KHC9"/>
<dbReference type="STRING" id="380703.AHA_1139"/>
<dbReference type="EnsemblBacteria" id="ABK38393">
    <property type="protein sequence ID" value="ABK38393"/>
    <property type="gene ID" value="AHA_1139"/>
</dbReference>
<dbReference type="KEGG" id="aha:AHA_1139"/>
<dbReference type="PATRIC" id="fig|380703.7.peg.1144"/>
<dbReference type="eggNOG" id="COG1347">
    <property type="taxonomic scope" value="Bacteria"/>
</dbReference>
<dbReference type="HOGENOM" id="CLU_046659_1_1_6"/>
<dbReference type="OrthoDB" id="9782945at2"/>
<dbReference type="PRO" id="PR:A0KHC9"/>
<dbReference type="Proteomes" id="UP000000756">
    <property type="component" value="Chromosome"/>
</dbReference>
<dbReference type="GO" id="GO:0005886">
    <property type="term" value="C:plasma membrane"/>
    <property type="evidence" value="ECO:0007669"/>
    <property type="project" value="UniProtKB-SubCell"/>
</dbReference>
<dbReference type="GO" id="GO:0016655">
    <property type="term" value="F:oxidoreductase activity, acting on NAD(P)H, quinone or similar compound as acceptor"/>
    <property type="evidence" value="ECO:0007669"/>
    <property type="project" value="UniProtKB-UniRule"/>
</dbReference>
<dbReference type="GO" id="GO:0006814">
    <property type="term" value="P:sodium ion transport"/>
    <property type="evidence" value="ECO:0007669"/>
    <property type="project" value="UniProtKB-UniRule"/>
</dbReference>
<dbReference type="HAMAP" id="MF_00428">
    <property type="entry name" value="NqrD"/>
    <property type="match status" value="1"/>
</dbReference>
<dbReference type="InterPro" id="IPR011292">
    <property type="entry name" value="NqrD"/>
</dbReference>
<dbReference type="InterPro" id="IPR003667">
    <property type="entry name" value="NqrDE/RnfAE"/>
</dbReference>
<dbReference type="NCBIfam" id="TIGR01939">
    <property type="entry name" value="nqrD"/>
    <property type="match status" value="1"/>
</dbReference>
<dbReference type="NCBIfam" id="NF006777">
    <property type="entry name" value="PRK09292.1"/>
    <property type="match status" value="1"/>
</dbReference>
<dbReference type="NCBIfam" id="NF009070">
    <property type="entry name" value="PRK12405.1"/>
    <property type="match status" value="1"/>
</dbReference>
<dbReference type="PANTHER" id="PTHR30586">
    <property type="entry name" value="ELECTRON TRANSPORT COMPLEX PROTEIN RNFE"/>
    <property type="match status" value="1"/>
</dbReference>
<dbReference type="PANTHER" id="PTHR30586:SF1">
    <property type="entry name" value="NA(+)-TRANSLOCATING NADH-QUINONE REDUCTASE SUBUNIT D"/>
    <property type="match status" value="1"/>
</dbReference>
<dbReference type="Pfam" id="PF02508">
    <property type="entry name" value="Rnf-Nqr"/>
    <property type="match status" value="1"/>
</dbReference>
<dbReference type="PIRSF" id="PIRSF006102">
    <property type="entry name" value="NQR_DE"/>
    <property type="match status" value="1"/>
</dbReference>
<organism>
    <name type="scientific">Aeromonas hydrophila subsp. hydrophila (strain ATCC 7966 / DSM 30187 / BCRC 13018 / CCUG 14551 / JCM 1027 / KCTC 2358 / NCIMB 9240 / NCTC 8049)</name>
    <dbReference type="NCBI Taxonomy" id="380703"/>
    <lineage>
        <taxon>Bacteria</taxon>
        <taxon>Pseudomonadati</taxon>
        <taxon>Pseudomonadota</taxon>
        <taxon>Gammaproteobacteria</taxon>
        <taxon>Aeromonadales</taxon>
        <taxon>Aeromonadaceae</taxon>
        <taxon>Aeromonas</taxon>
    </lineage>
</organism>
<accession>A0KHC9</accession>
<comment type="function">
    <text evidence="1">NQR complex catalyzes the reduction of ubiquinone-1 to ubiquinol by two successive reactions, coupled with the transport of Na(+) ions from the cytoplasm to the periplasm. NqrA to NqrE are probably involved in the second step, the conversion of ubisemiquinone to ubiquinol.</text>
</comment>
<comment type="catalytic activity">
    <reaction evidence="1">
        <text>a ubiquinone + n Na(+)(in) + NADH + H(+) = a ubiquinol + n Na(+)(out) + NAD(+)</text>
        <dbReference type="Rhea" id="RHEA:47748"/>
        <dbReference type="Rhea" id="RHEA-COMP:9565"/>
        <dbReference type="Rhea" id="RHEA-COMP:9566"/>
        <dbReference type="ChEBI" id="CHEBI:15378"/>
        <dbReference type="ChEBI" id="CHEBI:16389"/>
        <dbReference type="ChEBI" id="CHEBI:17976"/>
        <dbReference type="ChEBI" id="CHEBI:29101"/>
        <dbReference type="ChEBI" id="CHEBI:57540"/>
        <dbReference type="ChEBI" id="CHEBI:57945"/>
        <dbReference type="EC" id="7.2.1.1"/>
    </reaction>
</comment>
<comment type="subunit">
    <text evidence="1">Composed of six subunits; NqrA, NqrB, NqrC, NqrD, NqrE and NqrF.</text>
</comment>
<comment type="subcellular location">
    <subcellularLocation>
        <location evidence="1">Cell inner membrane</location>
        <topology evidence="1">Multi-pass membrane protein</topology>
    </subcellularLocation>
</comment>
<comment type="similarity">
    <text evidence="1">Belongs to the NqrDE/RnfAE family.</text>
</comment>
<name>NQRD_AERHH</name>